<evidence type="ECO:0000255" key="1">
    <source>
        <dbReference type="HAMAP-Rule" id="MF_00369"/>
    </source>
</evidence>
<evidence type="ECO:0000256" key="2">
    <source>
        <dbReference type="SAM" id="MobiDB-lite"/>
    </source>
</evidence>
<evidence type="ECO:0000305" key="3"/>
<name>RL21_SACI2</name>
<accession>C3MQ30</accession>
<gene>
    <name evidence="1" type="primary">rpl21e</name>
    <name type="ordered locus">LS215_1485</name>
</gene>
<comment type="similarity">
    <text evidence="1">Belongs to the eukaryotic ribosomal protein eL21 family.</text>
</comment>
<proteinExistence type="inferred from homology"/>
<sequence>MVKHSRGYRTRSRSLLRKSPRERGAVPSLSRLMVEYKEGDKVVIKINPSVHSGMPHRRYQGKVGKIIGKRGRAYLVSVTLGDKEKVIIVRPEHLVSFSSSG</sequence>
<protein>
    <recommendedName>
        <fullName evidence="1">Large ribosomal subunit protein eL21</fullName>
    </recommendedName>
    <alternativeName>
        <fullName evidence="3">50S ribosomal protein L21e</fullName>
    </alternativeName>
</protein>
<keyword id="KW-0687">Ribonucleoprotein</keyword>
<keyword id="KW-0689">Ribosomal protein</keyword>
<feature type="chain" id="PRO_1000205575" description="Large ribosomal subunit protein eL21">
    <location>
        <begin position="1"/>
        <end position="101"/>
    </location>
</feature>
<feature type="region of interest" description="Disordered" evidence="2">
    <location>
        <begin position="1"/>
        <end position="23"/>
    </location>
</feature>
<feature type="compositionally biased region" description="Basic residues" evidence="2">
    <location>
        <begin position="1"/>
        <end position="18"/>
    </location>
</feature>
<reference key="1">
    <citation type="journal article" date="2009" name="Proc. Natl. Acad. Sci. U.S.A.">
        <title>Biogeography of the Sulfolobus islandicus pan-genome.</title>
        <authorList>
            <person name="Reno M.L."/>
            <person name="Held N.L."/>
            <person name="Fields C.J."/>
            <person name="Burke P.V."/>
            <person name="Whitaker R.J."/>
        </authorList>
    </citation>
    <scope>NUCLEOTIDE SEQUENCE [LARGE SCALE GENOMIC DNA]</scope>
    <source>
        <strain>L.S.2.15 / Lassen #1</strain>
    </source>
</reference>
<organism>
    <name type="scientific">Saccharolobus islandicus (strain L.S.2.15 / Lassen #1)</name>
    <name type="common">Sulfolobus islandicus</name>
    <dbReference type="NCBI Taxonomy" id="429572"/>
    <lineage>
        <taxon>Archaea</taxon>
        <taxon>Thermoproteota</taxon>
        <taxon>Thermoprotei</taxon>
        <taxon>Sulfolobales</taxon>
        <taxon>Sulfolobaceae</taxon>
        <taxon>Saccharolobus</taxon>
    </lineage>
</organism>
<dbReference type="EMBL" id="CP001399">
    <property type="protein sequence ID" value="ACP35493.1"/>
    <property type="molecule type" value="Genomic_DNA"/>
</dbReference>
<dbReference type="RefSeq" id="WP_012711388.1">
    <property type="nucleotide sequence ID" value="NC_012589.1"/>
</dbReference>
<dbReference type="SMR" id="C3MQ30"/>
<dbReference type="KEGG" id="sis:LS215_1485"/>
<dbReference type="HOGENOM" id="CLU_103610_1_1_2"/>
<dbReference type="OrthoDB" id="6295at2157"/>
<dbReference type="Proteomes" id="UP000001747">
    <property type="component" value="Chromosome"/>
</dbReference>
<dbReference type="GO" id="GO:1990904">
    <property type="term" value="C:ribonucleoprotein complex"/>
    <property type="evidence" value="ECO:0007669"/>
    <property type="project" value="UniProtKB-KW"/>
</dbReference>
<dbReference type="GO" id="GO:0005840">
    <property type="term" value="C:ribosome"/>
    <property type="evidence" value="ECO:0007669"/>
    <property type="project" value="UniProtKB-KW"/>
</dbReference>
<dbReference type="GO" id="GO:0003735">
    <property type="term" value="F:structural constituent of ribosome"/>
    <property type="evidence" value="ECO:0007669"/>
    <property type="project" value="InterPro"/>
</dbReference>
<dbReference type="GO" id="GO:0006412">
    <property type="term" value="P:translation"/>
    <property type="evidence" value="ECO:0007669"/>
    <property type="project" value="UniProtKB-UniRule"/>
</dbReference>
<dbReference type="FunFam" id="2.30.30.70:FF:000001">
    <property type="entry name" value="60S ribosomal protein L21"/>
    <property type="match status" value="1"/>
</dbReference>
<dbReference type="Gene3D" id="2.30.30.70">
    <property type="entry name" value="Ribosomal protein L21"/>
    <property type="match status" value="1"/>
</dbReference>
<dbReference type="HAMAP" id="MF_00369">
    <property type="entry name" value="Ribosomal_eL21"/>
    <property type="match status" value="1"/>
</dbReference>
<dbReference type="InterPro" id="IPR001147">
    <property type="entry name" value="Ribosomal_eL21"/>
</dbReference>
<dbReference type="InterPro" id="IPR022856">
    <property type="entry name" value="Ribosomal_eL21_arc"/>
</dbReference>
<dbReference type="InterPro" id="IPR018259">
    <property type="entry name" value="Ribosomal_eL21_CS"/>
</dbReference>
<dbReference type="InterPro" id="IPR036948">
    <property type="entry name" value="Ribosomal_eL21_sf"/>
</dbReference>
<dbReference type="InterPro" id="IPR008991">
    <property type="entry name" value="Translation_prot_SH3-like_sf"/>
</dbReference>
<dbReference type="NCBIfam" id="NF003303">
    <property type="entry name" value="PRK04306.1"/>
    <property type="match status" value="1"/>
</dbReference>
<dbReference type="PANTHER" id="PTHR20981">
    <property type="entry name" value="60S RIBOSOMAL PROTEIN L21"/>
    <property type="match status" value="1"/>
</dbReference>
<dbReference type="Pfam" id="PF01157">
    <property type="entry name" value="Ribosomal_L21e"/>
    <property type="match status" value="1"/>
</dbReference>
<dbReference type="SUPFAM" id="SSF50104">
    <property type="entry name" value="Translation proteins SH3-like domain"/>
    <property type="match status" value="1"/>
</dbReference>
<dbReference type="PROSITE" id="PS01171">
    <property type="entry name" value="RIBOSOMAL_L21E"/>
    <property type="match status" value="1"/>
</dbReference>